<reference key="1">
    <citation type="journal article" date="2002" name="Proc. Natl. Acad. Sci. U.S.A.">
        <title>Extensive mosaic structure revealed by the complete genome sequence of uropathogenic Escherichia coli.</title>
        <authorList>
            <person name="Welch R.A."/>
            <person name="Burland V."/>
            <person name="Plunkett G. III"/>
            <person name="Redford P."/>
            <person name="Roesch P."/>
            <person name="Rasko D."/>
            <person name="Buckles E.L."/>
            <person name="Liou S.-R."/>
            <person name="Boutin A."/>
            <person name="Hackett J."/>
            <person name="Stroud D."/>
            <person name="Mayhew G.F."/>
            <person name="Rose D.J."/>
            <person name="Zhou S."/>
            <person name="Schwartz D.C."/>
            <person name="Perna N.T."/>
            <person name="Mobley H.L.T."/>
            <person name="Donnenberg M.S."/>
            <person name="Blattner F.R."/>
        </authorList>
    </citation>
    <scope>NUCLEOTIDE SEQUENCE [LARGE SCALE GENOMIC DNA]</scope>
    <source>
        <strain>CFT073 / ATCC 700928 / UPEC</strain>
    </source>
</reference>
<name>DNLJ_ECOL6</name>
<organism>
    <name type="scientific">Escherichia coli O6:H1 (strain CFT073 / ATCC 700928 / UPEC)</name>
    <dbReference type="NCBI Taxonomy" id="199310"/>
    <lineage>
        <taxon>Bacteria</taxon>
        <taxon>Pseudomonadati</taxon>
        <taxon>Pseudomonadota</taxon>
        <taxon>Gammaproteobacteria</taxon>
        <taxon>Enterobacterales</taxon>
        <taxon>Enterobacteriaceae</taxon>
        <taxon>Escherichia</taxon>
    </lineage>
</organism>
<evidence type="ECO:0000255" key="1">
    <source>
        <dbReference type="HAMAP-Rule" id="MF_01588"/>
    </source>
</evidence>
<proteinExistence type="inferred from homology"/>
<feature type="chain" id="PRO_0000313234" description="DNA ligase">
    <location>
        <begin position="1"/>
        <end position="671"/>
    </location>
</feature>
<feature type="domain" description="BRCT" evidence="1">
    <location>
        <begin position="593"/>
        <end position="671"/>
    </location>
</feature>
<feature type="active site" description="N6-AMP-lysine intermediate" evidence="1">
    <location>
        <position position="115"/>
    </location>
</feature>
<feature type="binding site" evidence="1">
    <location>
        <begin position="32"/>
        <end position="36"/>
    </location>
    <ligand>
        <name>NAD(+)</name>
        <dbReference type="ChEBI" id="CHEBI:57540"/>
    </ligand>
</feature>
<feature type="binding site" evidence="1">
    <location>
        <begin position="81"/>
        <end position="82"/>
    </location>
    <ligand>
        <name>NAD(+)</name>
        <dbReference type="ChEBI" id="CHEBI:57540"/>
    </ligand>
</feature>
<feature type="binding site" evidence="1">
    <location>
        <position position="113"/>
    </location>
    <ligand>
        <name>NAD(+)</name>
        <dbReference type="ChEBI" id="CHEBI:57540"/>
    </ligand>
</feature>
<feature type="binding site" evidence="1">
    <location>
        <position position="136"/>
    </location>
    <ligand>
        <name>NAD(+)</name>
        <dbReference type="ChEBI" id="CHEBI:57540"/>
    </ligand>
</feature>
<feature type="binding site" evidence="1">
    <location>
        <position position="173"/>
    </location>
    <ligand>
        <name>NAD(+)</name>
        <dbReference type="ChEBI" id="CHEBI:57540"/>
    </ligand>
</feature>
<feature type="binding site" evidence="1">
    <location>
        <position position="290"/>
    </location>
    <ligand>
        <name>NAD(+)</name>
        <dbReference type="ChEBI" id="CHEBI:57540"/>
    </ligand>
</feature>
<feature type="binding site" evidence="1">
    <location>
        <position position="314"/>
    </location>
    <ligand>
        <name>NAD(+)</name>
        <dbReference type="ChEBI" id="CHEBI:57540"/>
    </ligand>
</feature>
<feature type="binding site" evidence="1">
    <location>
        <position position="408"/>
    </location>
    <ligand>
        <name>Zn(2+)</name>
        <dbReference type="ChEBI" id="CHEBI:29105"/>
    </ligand>
</feature>
<feature type="binding site" evidence="1">
    <location>
        <position position="411"/>
    </location>
    <ligand>
        <name>Zn(2+)</name>
        <dbReference type="ChEBI" id="CHEBI:29105"/>
    </ligand>
</feature>
<feature type="binding site" evidence="1">
    <location>
        <position position="426"/>
    </location>
    <ligand>
        <name>Zn(2+)</name>
        <dbReference type="ChEBI" id="CHEBI:29105"/>
    </ligand>
</feature>
<feature type="binding site" evidence="1">
    <location>
        <position position="432"/>
    </location>
    <ligand>
        <name>Zn(2+)</name>
        <dbReference type="ChEBI" id="CHEBI:29105"/>
    </ligand>
</feature>
<comment type="function">
    <text evidence="1">DNA ligase that catalyzes the formation of phosphodiester linkages between 5'-phosphoryl and 3'-hydroxyl groups in double-stranded DNA using NAD as a coenzyme and as the energy source for the reaction. It is essential for DNA replication and repair of damaged DNA.</text>
</comment>
<comment type="catalytic activity">
    <reaction evidence="1">
        <text>NAD(+) + (deoxyribonucleotide)n-3'-hydroxyl + 5'-phospho-(deoxyribonucleotide)m = (deoxyribonucleotide)n+m + AMP + beta-nicotinamide D-nucleotide.</text>
        <dbReference type="EC" id="6.5.1.2"/>
    </reaction>
</comment>
<comment type="cofactor">
    <cofactor evidence="1">
        <name>Mg(2+)</name>
        <dbReference type="ChEBI" id="CHEBI:18420"/>
    </cofactor>
    <cofactor evidence="1">
        <name>Mn(2+)</name>
        <dbReference type="ChEBI" id="CHEBI:29035"/>
    </cofactor>
</comment>
<comment type="similarity">
    <text evidence="1">Belongs to the NAD-dependent DNA ligase family. LigA subfamily.</text>
</comment>
<accession>Q8FFC1</accession>
<sequence length="671" mass="73667">MESIEQQLTELRTTLRHHEYLYHVMDAPEIPDAEYDRLMRELRELETKHPELITPDSPTQRVGAAPLAAFSQIRHEVPMLSLDNVFDEESFLAFNKRVQDRLKSNEKVTWCCELKLDGLAVSILYENGVLVSAATRGDGTTGEDITSNVRTIRAIPLKLHGENIPARLEVRGEVFLPQAGFEKINEDARRTGGKVFANPRNAAAGSLRQLDPRITAKRPLTFFCYGVGVLEGGELPDTHLGRLLQFKKWGLPVSDRVTLCESAEEVLAFYHKVEEDRPTLGFDIDGVVIKVNSLAQQEQLGFVARAPRWAVAFKFPAQEQMTFVRDVEFQVGRTGAITPVARLEPVHVAGVLVSNATLHNADEIERLGLRIGDKVVIRRAGDVIPQVVNVVLSERPEDTREVVFPTHCPVCGSDVERVEGEAVARCTGGLICGAQRKESLKHFVSRRAMDVDGMGDKIIDQLVEKEYVHTPADLFKLTAGKLTGLERMGPKSAQNVVNALEKAKETTFARFLYALGIREVGEATAAGLAAYFGTLEALEAASIEELQKVPDVGIVVASHVHNFFAEESNRNVISELLAEGVHWPEPIVINAEEIDSPFAGKTVVLTGSLSQMSRDDAKARLVELGAKVAGSVSKKTDLVIAGEAAGSKLAKAQELGIEVIDETEMLRLLGS</sequence>
<gene>
    <name evidence="1" type="primary">ligA</name>
    <name type="ordered locus">c2945</name>
</gene>
<keyword id="KW-0227">DNA damage</keyword>
<keyword id="KW-0234">DNA repair</keyword>
<keyword id="KW-0235">DNA replication</keyword>
<keyword id="KW-0436">Ligase</keyword>
<keyword id="KW-0460">Magnesium</keyword>
<keyword id="KW-0464">Manganese</keyword>
<keyword id="KW-0479">Metal-binding</keyword>
<keyword id="KW-0520">NAD</keyword>
<keyword id="KW-1185">Reference proteome</keyword>
<keyword id="KW-0862">Zinc</keyword>
<dbReference type="EC" id="6.5.1.2" evidence="1"/>
<dbReference type="EMBL" id="AE014075">
    <property type="protein sequence ID" value="AAN81395.1"/>
    <property type="molecule type" value="Genomic_DNA"/>
</dbReference>
<dbReference type="RefSeq" id="WP_000443690.1">
    <property type="nucleotide sequence ID" value="NZ_CP051263.1"/>
</dbReference>
<dbReference type="SMR" id="Q8FFC1"/>
<dbReference type="STRING" id="199310.c2945"/>
<dbReference type="KEGG" id="ecc:c2945"/>
<dbReference type="eggNOG" id="COG0272">
    <property type="taxonomic scope" value="Bacteria"/>
</dbReference>
<dbReference type="HOGENOM" id="CLU_007764_2_1_6"/>
<dbReference type="BioCyc" id="ECOL199310:C2945-MONOMER"/>
<dbReference type="Proteomes" id="UP000001410">
    <property type="component" value="Chromosome"/>
</dbReference>
<dbReference type="GO" id="GO:0005829">
    <property type="term" value="C:cytosol"/>
    <property type="evidence" value="ECO:0007669"/>
    <property type="project" value="TreeGrafter"/>
</dbReference>
<dbReference type="GO" id="GO:0003677">
    <property type="term" value="F:DNA binding"/>
    <property type="evidence" value="ECO:0007669"/>
    <property type="project" value="InterPro"/>
</dbReference>
<dbReference type="GO" id="GO:0003911">
    <property type="term" value="F:DNA ligase (NAD+) activity"/>
    <property type="evidence" value="ECO:0007669"/>
    <property type="project" value="UniProtKB-UniRule"/>
</dbReference>
<dbReference type="GO" id="GO:0046872">
    <property type="term" value="F:metal ion binding"/>
    <property type="evidence" value="ECO:0007669"/>
    <property type="project" value="UniProtKB-KW"/>
</dbReference>
<dbReference type="GO" id="GO:0006281">
    <property type="term" value="P:DNA repair"/>
    <property type="evidence" value="ECO:0007669"/>
    <property type="project" value="UniProtKB-KW"/>
</dbReference>
<dbReference type="GO" id="GO:0006260">
    <property type="term" value="P:DNA replication"/>
    <property type="evidence" value="ECO:0007669"/>
    <property type="project" value="UniProtKB-KW"/>
</dbReference>
<dbReference type="CDD" id="cd17748">
    <property type="entry name" value="BRCT_DNA_ligase_like"/>
    <property type="match status" value="1"/>
</dbReference>
<dbReference type="CDD" id="cd00114">
    <property type="entry name" value="LIGANc"/>
    <property type="match status" value="1"/>
</dbReference>
<dbReference type="FunFam" id="1.10.150.20:FF:000006">
    <property type="entry name" value="DNA ligase"/>
    <property type="match status" value="1"/>
</dbReference>
<dbReference type="FunFam" id="1.10.150.20:FF:000007">
    <property type="entry name" value="DNA ligase"/>
    <property type="match status" value="1"/>
</dbReference>
<dbReference type="FunFam" id="1.10.287.610:FF:000002">
    <property type="entry name" value="DNA ligase"/>
    <property type="match status" value="1"/>
</dbReference>
<dbReference type="FunFam" id="2.40.50.140:FF:000012">
    <property type="entry name" value="DNA ligase"/>
    <property type="match status" value="1"/>
</dbReference>
<dbReference type="FunFam" id="3.30.470.30:FF:000001">
    <property type="entry name" value="DNA ligase"/>
    <property type="match status" value="1"/>
</dbReference>
<dbReference type="FunFam" id="3.40.50.10190:FF:000004">
    <property type="entry name" value="DNA ligase"/>
    <property type="match status" value="1"/>
</dbReference>
<dbReference type="FunFam" id="6.20.10.30:FF:000001">
    <property type="entry name" value="DNA ligase"/>
    <property type="match status" value="1"/>
</dbReference>
<dbReference type="Gene3D" id="6.20.10.30">
    <property type="match status" value="1"/>
</dbReference>
<dbReference type="Gene3D" id="1.10.150.20">
    <property type="entry name" value="5' to 3' exonuclease, C-terminal subdomain"/>
    <property type="match status" value="2"/>
</dbReference>
<dbReference type="Gene3D" id="3.40.50.10190">
    <property type="entry name" value="BRCT domain"/>
    <property type="match status" value="1"/>
</dbReference>
<dbReference type="Gene3D" id="3.30.470.30">
    <property type="entry name" value="DNA ligase/mRNA capping enzyme"/>
    <property type="match status" value="1"/>
</dbReference>
<dbReference type="Gene3D" id="1.10.287.610">
    <property type="entry name" value="Helix hairpin bin"/>
    <property type="match status" value="1"/>
</dbReference>
<dbReference type="Gene3D" id="2.40.50.140">
    <property type="entry name" value="Nucleic acid-binding proteins"/>
    <property type="match status" value="1"/>
</dbReference>
<dbReference type="HAMAP" id="MF_01588">
    <property type="entry name" value="DNA_ligase_A"/>
    <property type="match status" value="1"/>
</dbReference>
<dbReference type="InterPro" id="IPR001357">
    <property type="entry name" value="BRCT_dom"/>
</dbReference>
<dbReference type="InterPro" id="IPR036420">
    <property type="entry name" value="BRCT_dom_sf"/>
</dbReference>
<dbReference type="InterPro" id="IPR041663">
    <property type="entry name" value="DisA/LigA_HHH"/>
</dbReference>
<dbReference type="InterPro" id="IPR001679">
    <property type="entry name" value="DNA_ligase"/>
</dbReference>
<dbReference type="InterPro" id="IPR018239">
    <property type="entry name" value="DNA_ligase_AS"/>
</dbReference>
<dbReference type="InterPro" id="IPR033136">
    <property type="entry name" value="DNA_ligase_CS"/>
</dbReference>
<dbReference type="InterPro" id="IPR013839">
    <property type="entry name" value="DNAligase_adenylation"/>
</dbReference>
<dbReference type="InterPro" id="IPR013840">
    <property type="entry name" value="DNAligase_N"/>
</dbReference>
<dbReference type="InterPro" id="IPR003583">
    <property type="entry name" value="Hlx-hairpin-Hlx_DNA-bd_motif"/>
</dbReference>
<dbReference type="InterPro" id="IPR012340">
    <property type="entry name" value="NA-bd_OB-fold"/>
</dbReference>
<dbReference type="InterPro" id="IPR004150">
    <property type="entry name" value="NAD_DNA_ligase_OB"/>
</dbReference>
<dbReference type="InterPro" id="IPR010994">
    <property type="entry name" value="RuvA_2-like"/>
</dbReference>
<dbReference type="InterPro" id="IPR004149">
    <property type="entry name" value="Znf_DNAligase_C4"/>
</dbReference>
<dbReference type="NCBIfam" id="TIGR00575">
    <property type="entry name" value="dnlj"/>
    <property type="match status" value="1"/>
</dbReference>
<dbReference type="NCBIfam" id="NF005932">
    <property type="entry name" value="PRK07956.1"/>
    <property type="match status" value="1"/>
</dbReference>
<dbReference type="PANTHER" id="PTHR23389">
    <property type="entry name" value="CHROMOSOME TRANSMISSION FIDELITY FACTOR 18"/>
    <property type="match status" value="1"/>
</dbReference>
<dbReference type="PANTHER" id="PTHR23389:SF9">
    <property type="entry name" value="DNA LIGASE"/>
    <property type="match status" value="1"/>
</dbReference>
<dbReference type="Pfam" id="PF00533">
    <property type="entry name" value="BRCT"/>
    <property type="match status" value="1"/>
</dbReference>
<dbReference type="Pfam" id="PF01653">
    <property type="entry name" value="DNA_ligase_aden"/>
    <property type="match status" value="1"/>
</dbReference>
<dbReference type="Pfam" id="PF03120">
    <property type="entry name" value="DNA_ligase_OB"/>
    <property type="match status" value="1"/>
</dbReference>
<dbReference type="Pfam" id="PF03119">
    <property type="entry name" value="DNA_ligase_ZBD"/>
    <property type="match status" value="1"/>
</dbReference>
<dbReference type="Pfam" id="PF12826">
    <property type="entry name" value="HHH_2"/>
    <property type="match status" value="1"/>
</dbReference>
<dbReference type="Pfam" id="PF14520">
    <property type="entry name" value="HHH_5"/>
    <property type="match status" value="1"/>
</dbReference>
<dbReference type="Pfam" id="PF22745">
    <property type="entry name" value="Nlig-Ia"/>
    <property type="match status" value="1"/>
</dbReference>
<dbReference type="PIRSF" id="PIRSF001604">
    <property type="entry name" value="LigA"/>
    <property type="match status" value="1"/>
</dbReference>
<dbReference type="SMART" id="SM00292">
    <property type="entry name" value="BRCT"/>
    <property type="match status" value="1"/>
</dbReference>
<dbReference type="SMART" id="SM00278">
    <property type="entry name" value="HhH1"/>
    <property type="match status" value="4"/>
</dbReference>
<dbReference type="SMART" id="SM00532">
    <property type="entry name" value="LIGANc"/>
    <property type="match status" value="1"/>
</dbReference>
<dbReference type="SUPFAM" id="SSF52113">
    <property type="entry name" value="BRCT domain"/>
    <property type="match status" value="1"/>
</dbReference>
<dbReference type="SUPFAM" id="SSF56091">
    <property type="entry name" value="DNA ligase/mRNA capping enzyme, catalytic domain"/>
    <property type="match status" value="1"/>
</dbReference>
<dbReference type="SUPFAM" id="SSF50249">
    <property type="entry name" value="Nucleic acid-binding proteins"/>
    <property type="match status" value="1"/>
</dbReference>
<dbReference type="SUPFAM" id="SSF47781">
    <property type="entry name" value="RuvA domain 2-like"/>
    <property type="match status" value="1"/>
</dbReference>
<dbReference type="PROSITE" id="PS50172">
    <property type="entry name" value="BRCT"/>
    <property type="match status" value="1"/>
</dbReference>
<dbReference type="PROSITE" id="PS01055">
    <property type="entry name" value="DNA_LIGASE_N1"/>
    <property type="match status" value="1"/>
</dbReference>
<dbReference type="PROSITE" id="PS01056">
    <property type="entry name" value="DNA_LIGASE_N2"/>
    <property type="match status" value="1"/>
</dbReference>
<protein>
    <recommendedName>
        <fullName evidence="1">DNA ligase</fullName>
        <ecNumber evidence="1">6.5.1.2</ecNumber>
    </recommendedName>
    <alternativeName>
        <fullName evidence="1">Polydeoxyribonucleotide synthase [NAD(+)]</fullName>
    </alternativeName>
</protein>